<reference key="1">
    <citation type="journal article" date="2005" name="Science">
        <title>The transcriptional landscape of the mammalian genome.</title>
        <authorList>
            <person name="Carninci P."/>
            <person name="Kasukawa T."/>
            <person name="Katayama S."/>
            <person name="Gough J."/>
            <person name="Frith M.C."/>
            <person name="Maeda N."/>
            <person name="Oyama R."/>
            <person name="Ravasi T."/>
            <person name="Lenhard B."/>
            <person name="Wells C."/>
            <person name="Kodzius R."/>
            <person name="Shimokawa K."/>
            <person name="Bajic V.B."/>
            <person name="Brenner S.E."/>
            <person name="Batalov S."/>
            <person name="Forrest A.R."/>
            <person name="Zavolan M."/>
            <person name="Davis M.J."/>
            <person name="Wilming L.G."/>
            <person name="Aidinis V."/>
            <person name="Allen J.E."/>
            <person name="Ambesi-Impiombato A."/>
            <person name="Apweiler R."/>
            <person name="Aturaliya R.N."/>
            <person name="Bailey T.L."/>
            <person name="Bansal M."/>
            <person name="Baxter L."/>
            <person name="Beisel K.W."/>
            <person name="Bersano T."/>
            <person name="Bono H."/>
            <person name="Chalk A.M."/>
            <person name="Chiu K.P."/>
            <person name="Choudhary V."/>
            <person name="Christoffels A."/>
            <person name="Clutterbuck D.R."/>
            <person name="Crowe M.L."/>
            <person name="Dalla E."/>
            <person name="Dalrymple B.P."/>
            <person name="de Bono B."/>
            <person name="Della Gatta G."/>
            <person name="di Bernardo D."/>
            <person name="Down T."/>
            <person name="Engstrom P."/>
            <person name="Fagiolini M."/>
            <person name="Faulkner G."/>
            <person name="Fletcher C.F."/>
            <person name="Fukushima T."/>
            <person name="Furuno M."/>
            <person name="Futaki S."/>
            <person name="Gariboldi M."/>
            <person name="Georgii-Hemming P."/>
            <person name="Gingeras T.R."/>
            <person name="Gojobori T."/>
            <person name="Green R.E."/>
            <person name="Gustincich S."/>
            <person name="Harbers M."/>
            <person name="Hayashi Y."/>
            <person name="Hensch T.K."/>
            <person name="Hirokawa N."/>
            <person name="Hill D."/>
            <person name="Huminiecki L."/>
            <person name="Iacono M."/>
            <person name="Ikeo K."/>
            <person name="Iwama A."/>
            <person name="Ishikawa T."/>
            <person name="Jakt M."/>
            <person name="Kanapin A."/>
            <person name="Katoh M."/>
            <person name="Kawasawa Y."/>
            <person name="Kelso J."/>
            <person name="Kitamura H."/>
            <person name="Kitano H."/>
            <person name="Kollias G."/>
            <person name="Krishnan S.P."/>
            <person name="Kruger A."/>
            <person name="Kummerfeld S.K."/>
            <person name="Kurochkin I.V."/>
            <person name="Lareau L.F."/>
            <person name="Lazarevic D."/>
            <person name="Lipovich L."/>
            <person name="Liu J."/>
            <person name="Liuni S."/>
            <person name="McWilliam S."/>
            <person name="Madan Babu M."/>
            <person name="Madera M."/>
            <person name="Marchionni L."/>
            <person name="Matsuda H."/>
            <person name="Matsuzawa S."/>
            <person name="Miki H."/>
            <person name="Mignone F."/>
            <person name="Miyake S."/>
            <person name="Morris K."/>
            <person name="Mottagui-Tabar S."/>
            <person name="Mulder N."/>
            <person name="Nakano N."/>
            <person name="Nakauchi H."/>
            <person name="Ng P."/>
            <person name="Nilsson R."/>
            <person name="Nishiguchi S."/>
            <person name="Nishikawa S."/>
            <person name="Nori F."/>
            <person name="Ohara O."/>
            <person name="Okazaki Y."/>
            <person name="Orlando V."/>
            <person name="Pang K.C."/>
            <person name="Pavan W.J."/>
            <person name="Pavesi G."/>
            <person name="Pesole G."/>
            <person name="Petrovsky N."/>
            <person name="Piazza S."/>
            <person name="Reed J."/>
            <person name="Reid J.F."/>
            <person name="Ring B.Z."/>
            <person name="Ringwald M."/>
            <person name="Rost B."/>
            <person name="Ruan Y."/>
            <person name="Salzberg S.L."/>
            <person name="Sandelin A."/>
            <person name="Schneider C."/>
            <person name="Schoenbach C."/>
            <person name="Sekiguchi K."/>
            <person name="Semple C.A."/>
            <person name="Seno S."/>
            <person name="Sessa L."/>
            <person name="Sheng Y."/>
            <person name="Shibata Y."/>
            <person name="Shimada H."/>
            <person name="Shimada K."/>
            <person name="Silva D."/>
            <person name="Sinclair B."/>
            <person name="Sperling S."/>
            <person name="Stupka E."/>
            <person name="Sugiura K."/>
            <person name="Sultana R."/>
            <person name="Takenaka Y."/>
            <person name="Taki K."/>
            <person name="Tammoja K."/>
            <person name="Tan S.L."/>
            <person name="Tang S."/>
            <person name="Taylor M.S."/>
            <person name="Tegner J."/>
            <person name="Teichmann S.A."/>
            <person name="Ueda H.R."/>
            <person name="van Nimwegen E."/>
            <person name="Verardo R."/>
            <person name="Wei C.L."/>
            <person name="Yagi K."/>
            <person name="Yamanishi H."/>
            <person name="Zabarovsky E."/>
            <person name="Zhu S."/>
            <person name="Zimmer A."/>
            <person name="Hide W."/>
            <person name="Bult C."/>
            <person name="Grimmond S.M."/>
            <person name="Teasdale R.D."/>
            <person name="Liu E.T."/>
            <person name="Brusic V."/>
            <person name="Quackenbush J."/>
            <person name="Wahlestedt C."/>
            <person name="Mattick J.S."/>
            <person name="Hume D.A."/>
            <person name="Kai C."/>
            <person name="Sasaki D."/>
            <person name="Tomaru Y."/>
            <person name="Fukuda S."/>
            <person name="Kanamori-Katayama M."/>
            <person name="Suzuki M."/>
            <person name="Aoki J."/>
            <person name="Arakawa T."/>
            <person name="Iida J."/>
            <person name="Imamura K."/>
            <person name="Itoh M."/>
            <person name="Kato T."/>
            <person name="Kawaji H."/>
            <person name="Kawagashira N."/>
            <person name="Kawashima T."/>
            <person name="Kojima M."/>
            <person name="Kondo S."/>
            <person name="Konno H."/>
            <person name="Nakano K."/>
            <person name="Ninomiya N."/>
            <person name="Nishio T."/>
            <person name="Okada M."/>
            <person name="Plessy C."/>
            <person name="Shibata K."/>
            <person name="Shiraki T."/>
            <person name="Suzuki S."/>
            <person name="Tagami M."/>
            <person name="Waki K."/>
            <person name="Watahiki A."/>
            <person name="Okamura-Oho Y."/>
            <person name="Suzuki H."/>
            <person name="Kawai J."/>
            <person name="Hayashizaki Y."/>
        </authorList>
    </citation>
    <scope>NUCLEOTIDE SEQUENCE [LARGE SCALE MRNA]</scope>
    <source>
        <strain>C57BL/6J</strain>
        <tissue>Kidney</tissue>
        <tissue>Liver</tissue>
        <tissue>Olfactory bulb</tissue>
        <tissue>Pituitary</tissue>
        <tissue>Thymus</tissue>
    </source>
</reference>
<reference key="2">
    <citation type="journal article" date="2009" name="PLoS Biol.">
        <title>Lineage-specific biology revealed by a finished genome assembly of the mouse.</title>
        <authorList>
            <person name="Church D.M."/>
            <person name="Goodstadt L."/>
            <person name="Hillier L.W."/>
            <person name="Zody M.C."/>
            <person name="Goldstein S."/>
            <person name="She X."/>
            <person name="Bult C.J."/>
            <person name="Agarwala R."/>
            <person name="Cherry J.L."/>
            <person name="DiCuccio M."/>
            <person name="Hlavina W."/>
            <person name="Kapustin Y."/>
            <person name="Meric P."/>
            <person name="Maglott D."/>
            <person name="Birtle Z."/>
            <person name="Marques A.C."/>
            <person name="Graves T."/>
            <person name="Zhou S."/>
            <person name="Teague B."/>
            <person name="Potamousis K."/>
            <person name="Churas C."/>
            <person name="Place M."/>
            <person name="Herschleb J."/>
            <person name="Runnheim R."/>
            <person name="Forrest D."/>
            <person name="Amos-Landgraf J."/>
            <person name="Schwartz D.C."/>
            <person name="Cheng Z."/>
            <person name="Lindblad-Toh K."/>
            <person name="Eichler E.E."/>
            <person name="Ponting C.P."/>
        </authorList>
    </citation>
    <scope>NUCLEOTIDE SEQUENCE [LARGE SCALE GENOMIC DNA]</scope>
    <source>
        <strain>C57BL/6J</strain>
    </source>
</reference>
<reference key="3">
    <citation type="submission" date="2005-07" db="EMBL/GenBank/DDBJ databases">
        <authorList>
            <person name="Mural R.J."/>
            <person name="Adams M.D."/>
            <person name="Myers E.W."/>
            <person name="Smith H.O."/>
            <person name="Venter J.C."/>
        </authorList>
    </citation>
    <scope>NUCLEOTIDE SEQUENCE [LARGE SCALE GENOMIC DNA]</scope>
</reference>
<reference key="4">
    <citation type="journal article" date="2004" name="Genome Res.">
        <title>The status, quality, and expansion of the NIH full-length cDNA project: the Mammalian Gene Collection (MGC).</title>
        <authorList>
            <consortium name="The MGC Project Team"/>
        </authorList>
    </citation>
    <scope>NUCLEOTIDE SEQUENCE [LARGE SCALE MRNA]</scope>
    <source>
        <strain>C57BL/6J</strain>
        <tissue>Eye</tissue>
        <tissue>Pituitary</tissue>
    </source>
</reference>
<accession>Q8BGA5</accession>
<accession>Q3UIG9</accession>
<accession>Q52KQ6</accession>
<accession>Q5EBJ5</accession>
<accession>Q8C029</accession>
<dbReference type="EMBL" id="AK030560">
    <property type="protein sequence ID" value="BAC27022.1"/>
    <property type="molecule type" value="mRNA"/>
</dbReference>
<dbReference type="EMBL" id="AK032472">
    <property type="protein sequence ID" value="BAC27888.1"/>
    <property type="molecule type" value="mRNA"/>
</dbReference>
<dbReference type="EMBL" id="AK041854">
    <property type="protein sequence ID" value="BAC31083.1"/>
    <property type="molecule type" value="mRNA"/>
</dbReference>
<dbReference type="EMBL" id="AK146926">
    <property type="protein sequence ID" value="BAE27537.1"/>
    <property type="status" value="ALT_FRAME"/>
    <property type="molecule type" value="mRNA"/>
</dbReference>
<dbReference type="EMBL" id="AK168675">
    <property type="protein sequence ID" value="BAE40525.1"/>
    <property type="molecule type" value="mRNA"/>
</dbReference>
<dbReference type="EMBL" id="AC167231">
    <property type="status" value="NOT_ANNOTATED_CDS"/>
    <property type="molecule type" value="Genomic_DNA"/>
</dbReference>
<dbReference type="EMBL" id="CH466539">
    <property type="protein sequence ID" value="EDL21743.1"/>
    <property type="molecule type" value="Genomic_DNA"/>
</dbReference>
<dbReference type="EMBL" id="BC089510">
    <property type="protein sequence ID" value="AAH89510.1"/>
    <property type="molecule type" value="mRNA"/>
</dbReference>
<dbReference type="EMBL" id="BC094236">
    <property type="protein sequence ID" value="AAH94236.1"/>
    <property type="molecule type" value="mRNA"/>
</dbReference>
<dbReference type="CCDS" id="CCDS24168.1"/>
<dbReference type="RefSeq" id="NP_848725.2">
    <property type="nucleotide sequence ID" value="NM_178610.4"/>
</dbReference>
<dbReference type="SMR" id="Q8BGA5"/>
<dbReference type="BioGRID" id="206745">
    <property type="interactions" value="5"/>
</dbReference>
<dbReference type="FunCoup" id="Q8BGA5">
    <property type="interactions" value="3438"/>
</dbReference>
<dbReference type="STRING" id="10090.ENSMUSP00000125746"/>
<dbReference type="iPTMnet" id="Q8BGA5"/>
<dbReference type="PhosphoSitePlus" id="Q8BGA5"/>
<dbReference type="PaxDb" id="10090-ENSMUSP00000125746"/>
<dbReference type="PeptideAtlas" id="Q8BGA5"/>
<dbReference type="ProteomicsDB" id="263464"/>
<dbReference type="Pumba" id="Q8BGA5"/>
<dbReference type="Antibodypedia" id="29617">
    <property type="antibodies" value="177 antibodies from 28 providers"/>
</dbReference>
<dbReference type="DNASU" id="52705"/>
<dbReference type="Ensembl" id="ENSMUST00000163048.8">
    <property type="protein sequence ID" value="ENSMUSP00000125746.2"/>
    <property type="gene ID" value="ENSMUSG00000063334.17"/>
</dbReference>
<dbReference type="GeneID" id="52705"/>
<dbReference type="KEGG" id="mmu:52705"/>
<dbReference type="UCSC" id="uc007hag.2">
    <property type="organism name" value="mouse"/>
</dbReference>
<dbReference type="AGR" id="MGI:1289274"/>
<dbReference type="CTD" id="11103"/>
<dbReference type="MGI" id="MGI:1289274">
    <property type="gene designation" value="Krr1"/>
</dbReference>
<dbReference type="VEuPathDB" id="HostDB:ENSMUSG00000063334"/>
<dbReference type="eggNOG" id="KOG2874">
    <property type="taxonomic scope" value="Eukaryota"/>
</dbReference>
<dbReference type="GeneTree" id="ENSGT00390000018775"/>
<dbReference type="HOGENOM" id="CLU_040185_0_0_1"/>
<dbReference type="InParanoid" id="Q8BGA5"/>
<dbReference type="OMA" id="TPDIDKW"/>
<dbReference type="OrthoDB" id="441223at2759"/>
<dbReference type="PhylomeDB" id="Q8BGA5"/>
<dbReference type="TreeFam" id="TF105745"/>
<dbReference type="Reactome" id="R-MMU-6791226">
    <property type="pathway name" value="Major pathway of rRNA processing in the nucleolus and cytosol"/>
</dbReference>
<dbReference type="BioGRID-ORCS" id="52705">
    <property type="hits" value="29 hits in 78 CRISPR screens"/>
</dbReference>
<dbReference type="ChiTaRS" id="Krr1">
    <property type="organism name" value="mouse"/>
</dbReference>
<dbReference type="PRO" id="PR:Q8BGA5"/>
<dbReference type="Proteomes" id="UP000000589">
    <property type="component" value="Chromosome 10"/>
</dbReference>
<dbReference type="RNAct" id="Q8BGA5">
    <property type="molecule type" value="protein"/>
</dbReference>
<dbReference type="Bgee" id="ENSMUSG00000063334">
    <property type="expression patterns" value="Expressed in optic fissure and 263 other cell types or tissues"/>
</dbReference>
<dbReference type="ExpressionAtlas" id="Q8BGA5">
    <property type="expression patterns" value="baseline and differential"/>
</dbReference>
<dbReference type="GO" id="GO:0005694">
    <property type="term" value="C:chromosome"/>
    <property type="evidence" value="ECO:0007669"/>
    <property type="project" value="Ensembl"/>
</dbReference>
<dbReference type="GO" id="GO:0045171">
    <property type="term" value="C:intercellular bridge"/>
    <property type="evidence" value="ECO:0007669"/>
    <property type="project" value="Ensembl"/>
</dbReference>
<dbReference type="GO" id="GO:0005730">
    <property type="term" value="C:nucleolus"/>
    <property type="evidence" value="ECO:0007669"/>
    <property type="project" value="UniProtKB-SubCell"/>
</dbReference>
<dbReference type="GO" id="GO:0005654">
    <property type="term" value="C:nucleoplasm"/>
    <property type="evidence" value="ECO:0007669"/>
    <property type="project" value="Ensembl"/>
</dbReference>
<dbReference type="GO" id="GO:0032040">
    <property type="term" value="C:small-subunit processome"/>
    <property type="evidence" value="ECO:0000250"/>
    <property type="project" value="UniProtKB"/>
</dbReference>
<dbReference type="GO" id="GO:0003723">
    <property type="term" value="F:RNA binding"/>
    <property type="evidence" value="ECO:0007669"/>
    <property type="project" value="UniProtKB-KW"/>
</dbReference>
<dbReference type="GO" id="GO:0042274">
    <property type="term" value="P:ribosomal small subunit biogenesis"/>
    <property type="evidence" value="ECO:0000250"/>
    <property type="project" value="UniProtKB"/>
</dbReference>
<dbReference type="GO" id="GO:0006364">
    <property type="term" value="P:rRNA processing"/>
    <property type="evidence" value="ECO:0007669"/>
    <property type="project" value="UniProtKB-KW"/>
</dbReference>
<dbReference type="CDD" id="cd22393">
    <property type="entry name" value="KH-I_KRR1_rpt1"/>
    <property type="match status" value="1"/>
</dbReference>
<dbReference type="CDD" id="cd22394">
    <property type="entry name" value="KH-I_KRR1_rpt2"/>
    <property type="match status" value="1"/>
</dbReference>
<dbReference type="FunFam" id="3.30.1370.10:FF:000011">
    <property type="entry name" value="KRR1 small subunit processome component"/>
    <property type="match status" value="1"/>
</dbReference>
<dbReference type="FunFam" id="3.30.1370.10:FF:000014">
    <property type="entry name" value="KRR1 small subunit processome component"/>
    <property type="match status" value="1"/>
</dbReference>
<dbReference type="Gene3D" id="3.30.1370.10">
    <property type="entry name" value="K Homology domain, type 1"/>
    <property type="match status" value="2"/>
</dbReference>
<dbReference type="InterPro" id="IPR004087">
    <property type="entry name" value="KH_dom"/>
</dbReference>
<dbReference type="InterPro" id="IPR036612">
    <property type="entry name" value="KH_dom_type_1_sf"/>
</dbReference>
<dbReference type="InterPro" id="IPR041174">
    <property type="entry name" value="KRR1-like_KH1"/>
</dbReference>
<dbReference type="InterPro" id="IPR048550">
    <property type="entry name" value="KRR1-like_KH1_euk"/>
</dbReference>
<dbReference type="InterPro" id="IPR048548">
    <property type="entry name" value="KRR1-like_KH2"/>
</dbReference>
<dbReference type="InterPro" id="IPR048549">
    <property type="entry name" value="KRR1-like_KH2_euk"/>
</dbReference>
<dbReference type="InterPro" id="IPR024166">
    <property type="entry name" value="rRNA_assembly_KRR1"/>
</dbReference>
<dbReference type="PANTHER" id="PTHR12581">
    <property type="entry name" value="HIV-1 REV BINDING PROTEIN 2, 3"/>
    <property type="match status" value="1"/>
</dbReference>
<dbReference type="PANTHER" id="PTHR12581:SF0">
    <property type="entry name" value="KRR1 SMALL SUBUNIT PROCESSOME COMPONENT HOMOLOG"/>
    <property type="match status" value="1"/>
</dbReference>
<dbReference type="Pfam" id="PF17903">
    <property type="entry name" value="KH_KRR1_1st"/>
    <property type="match status" value="1"/>
</dbReference>
<dbReference type="Pfam" id="PF21800">
    <property type="entry name" value="KH_KRR1_2nd"/>
    <property type="match status" value="1"/>
</dbReference>
<dbReference type="PIRSF" id="PIRSF006515">
    <property type="entry name" value="KRR1"/>
    <property type="match status" value="1"/>
</dbReference>
<dbReference type="SMART" id="SM00322">
    <property type="entry name" value="KH"/>
    <property type="match status" value="1"/>
</dbReference>
<dbReference type="SUPFAM" id="SSF54791">
    <property type="entry name" value="Eukaryotic type KH-domain (KH-domain type I)"/>
    <property type="match status" value="1"/>
</dbReference>
<protein>
    <recommendedName>
        <fullName>KRR1 small subunit processome component homolog</fullName>
    </recommendedName>
    <alternativeName>
        <fullName>HIV-1 Rev-binding protein 2 homolog</fullName>
    </alternativeName>
    <alternativeName>
        <fullName>KRR-R motif-containing protein 1</fullName>
    </alternativeName>
</protein>
<name>KRR1_MOUSE</name>
<evidence type="ECO:0000250" key="1">
    <source>
        <dbReference type="UniProtKB" id="Q13601"/>
    </source>
</evidence>
<evidence type="ECO:0000256" key="2">
    <source>
        <dbReference type="SAM" id="MobiDB-lite"/>
    </source>
</evidence>
<evidence type="ECO:0000305" key="3"/>
<sequence length="380" mass="43538">MATSAEAPAKEAQKRDSQPQKQKRETQDEAELLTVPDGWKEPAFSKEDNPRGLLEESSFATLFPKYREAYLKECWPLVQKALNEHHVKATLDLIEGSMTVCTTKKTFDPYIIIRARDLIKLLARSVSFEQAVRILQDDVACDIIKIGSLVRNKERFVKRRQRLIGPKGSTLKALELLTNCYVMVQGNTVSAIGPFSGLKEVRKVVLDTMKNIHPIYNIKTLMIKRELAKDSELRSQSWERFLPQFKHKNVNKRKEPKKKSVKKEYTPFPPPQPESQIDKELASGEYFLKASQKKRQKMEAIKAKQAEALTKRQEERNKAFIPPKEKPAVKPKEASTETKIDVAAIKEKVKKAKTKKLGALTAEEVKLKMEADEKKQKRKK</sequence>
<proteinExistence type="evidence at transcript level"/>
<gene>
    <name type="primary">Krr1</name>
    <name type="synonym">Hrb2</name>
</gene>
<feature type="chain" id="PRO_0000050115" description="KRR1 small subunit processome component homolog">
    <location>
        <begin position="1"/>
        <end position="380"/>
    </location>
</feature>
<feature type="domain" description="KH">
    <location>
        <begin position="153"/>
        <end position="205"/>
    </location>
</feature>
<feature type="region of interest" description="Disordered" evidence="2">
    <location>
        <begin position="1"/>
        <end position="32"/>
    </location>
</feature>
<feature type="region of interest" description="Disordered" evidence="2">
    <location>
        <begin position="249"/>
        <end position="279"/>
    </location>
</feature>
<feature type="region of interest" description="Disordered" evidence="2">
    <location>
        <begin position="307"/>
        <end position="336"/>
    </location>
</feature>
<feature type="compositionally biased region" description="Basic and acidic residues" evidence="2">
    <location>
        <begin position="8"/>
        <end position="27"/>
    </location>
</feature>
<feature type="compositionally biased region" description="Basic residues" evidence="2">
    <location>
        <begin position="249"/>
        <end position="261"/>
    </location>
</feature>
<feature type="modified residue" description="Phosphoserine" evidence="1">
    <location>
        <position position="4"/>
    </location>
</feature>
<feature type="cross-link" description="Glycyl lysine isopeptide (Lys-Gly) (interchain with G-Cter in SUMO2)" evidence="1">
    <location>
        <position position="23"/>
    </location>
</feature>
<feature type="cross-link" description="Glycyl lysine isopeptide (Lys-Gly) (interchain with G-Cter in SUMO2)" evidence="1">
    <location>
        <position position="339"/>
    </location>
</feature>
<feature type="cross-link" description="Glycyl lysine isopeptide (Lys-Gly) (interchain with G-Cter in SUMO2)" evidence="1">
    <location>
        <position position="368"/>
    </location>
</feature>
<feature type="sequence conflict" description="In Ref. 4; AAH94236." evidence="3" ref="4">
    <original>G</original>
    <variation>V</variation>
    <location>
        <position position="38"/>
    </location>
</feature>
<feature type="sequence conflict" description="In Ref. 1; BAC27888." evidence="3" ref="1">
    <original>P</original>
    <variation>Q</variation>
    <location>
        <position position="243"/>
    </location>
</feature>
<feature type="sequence conflict" description="In Ref. 1; BAE27537." evidence="3" ref="1">
    <original>P</original>
    <variation>Q</variation>
    <location>
        <position position="331"/>
    </location>
</feature>
<comment type="function">
    <text evidence="1">Part of the small subunit (SSU) processome, first precursor of the small eukaryotic ribosomal subunit. During the assembly of the SSU processome in the nucleolus, many ribosome biogenesis factors, an RNA chaperone and ribosomal proteins associate with the nascent pre-rRNA and work in concert to generate RNA folding, modifications, rearrangements and cleavage as well as targeted degradation of pre-ribosomal RNA by the RNA exosome.</text>
</comment>
<comment type="subunit">
    <text evidence="1">Part of the small subunit (SSU) processome, composed of more than 70 proteins and the RNA chaperone small nucleolar RNA (snoRNA) U3.</text>
</comment>
<comment type="subcellular location">
    <subcellularLocation>
        <location evidence="1">Nucleus</location>
        <location evidence="1">Nucleolus</location>
    </subcellularLocation>
</comment>
<comment type="similarity">
    <text evidence="3">Belongs to the KRR1 family.</text>
</comment>
<comment type="sequence caution" evidence="3">
    <conflict type="frameshift">
        <sequence resource="EMBL-CDS" id="BAE27537"/>
    </conflict>
</comment>
<organism>
    <name type="scientific">Mus musculus</name>
    <name type="common">Mouse</name>
    <dbReference type="NCBI Taxonomy" id="10090"/>
    <lineage>
        <taxon>Eukaryota</taxon>
        <taxon>Metazoa</taxon>
        <taxon>Chordata</taxon>
        <taxon>Craniata</taxon>
        <taxon>Vertebrata</taxon>
        <taxon>Euteleostomi</taxon>
        <taxon>Mammalia</taxon>
        <taxon>Eutheria</taxon>
        <taxon>Euarchontoglires</taxon>
        <taxon>Glires</taxon>
        <taxon>Rodentia</taxon>
        <taxon>Myomorpha</taxon>
        <taxon>Muroidea</taxon>
        <taxon>Muridae</taxon>
        <taxon>Murinae</taxon>
        <taxon>Mus</taxon>
        <taxon>Mus</taxon>
    </lineage>
</organism>
<keyword id="KW-1017">Isopeptide bond</keyword>
<keyword id="KW-0539">Nucleus</keyword>
<keyword id="KW-0597">Phosphoprotein</keyword>
<keyword id="KW-1185">Reference proteome</keyword>
<keyword id="KW-0687">Ribonucleoprotein</keyword>
<keyword id="KW-0690">Ribosome biogenesis</keyword>
<keyword id="KW-0694">RNA-binding</keyword>
<keyword id="KW-0698">rRNA processing</keyword>
<keyword id="KW-0832">Ubl conjugation</keyword>